<accession>E1WAE4</accession>
<accession>P37423</accession>
<name>SCTG_SALTS</name>
<evidence type="ECO:0000250" key="1">
    <source>
        <dbReference type="UniProtKB" id="P0CL43"/>
    </source>
</evidence>
<evidence type="ECO:0000255" key="2">
    <source>
        <dbReference type="PROSITE-ProRule" id="PRU00303"/>
    </source>
</evidence>
<evidence type="ECO:0000269" key="3">
    <source>
    </source>
</evidence>
<evidence type="ECO:0000303" key="4">
    <source>
    </source>
</evidence>
<evidence type="ECO:0000305" key="5"/>
<protein>
    <recommendedName>
        <fullName evidence="5">SPI-1 type 3 secretion system pilotin</fullName>
    </recommendedName>
    <alternativeName>
        <fullName>Invasion lipoprotein invH</fullName>
    </alternativeName>
</protein>
<organism>
    <name type="scientific">Salmonella typhimurium (strain SL1344)</name>
    <dbReference type="NCBI Taxonomy" id="216597"/>
    <lineage>
        <taxon>Bacteria</taxon>
        <taxon>Pseudomonadati</taxon>
        <taxon>Pseudomonadota</taxon>
        <taxon>Gammaproteobacteria</taxon>
        <taxon>Enterobacterales</taxon>
        <taxon>Enterobacteriaceae</taxon>
        <taxon>Salmonella</taxon>
    </lineage>
</organism>
<feature type="signal peptide" evidence="2">
    <location>
        <begin position="1"/>
        <end position="15"/>
    </location>
</feature>
<feature type="chain" id="PRO_0000406077" description="SPI-1 type 3 secretion system pilotin" evidence="2">
    <location>
        <begin position="16"/>
        <end position="147"/>
    </location>
</feature>
<feature type="lipid moiety-binding region" description="N-palmitoyl cysteine" evidence="2">
    <location>
        <position position="16"/>
    </location>
</feature>
<feature type="lipid moiety-binding region" description="S-diacylglycerol cysteine" evidence="2">
    <location>
        <position position="16"/>
    </location>
</feature>
<gene>
    <name evidence="4" type="primary">invH</name>
    <name evidence="1" type="synonym">sctG</name>
    <name type="ordered locus">SL1344_2879</name>
</gene>
<comment type="function">
    <text evidence="1 3">Involved in the synthesis of the type III secretion system (T3SS), also called injectisome, which is used to inject bacterial effector proteins into eukaryotic host cells (By similarity). Pilot protein that is required for the proper localization of the secretin InvG/SctC in the outer membrane (By similarity). Necessary for efficient adherence and entry of these organisms into cultured epithelial cells (PubMed:8382333).</text>
</comment>
<comment type="subcellular location">
    <subcellularLocation>
        <location evidence="1">Cell outer membrane</location>
        <topology evidence="2">Lipid-anchor</topology>
    </subcellularLocation>
</comment>
<comment type="similarity">
    <text evidence="5">Belongs to the InvH family.</text>
</comment>
<sequence length="147" mass="16455">MKKFYSCLPVFLLIGCAQVPLPSSVSKPVQQPGAQKEQLANANSIDECQSLPYVPSDLAKNKSLSNHNADNSASKNSAISSSIFCEKYKQTKEQALTFFQEHPQYMRSKEDEEQLMTEFKKVLLEPGSKNLSIYQTLLAAHERLQAL</sequence>
<keyword id="KW-0998">Cell outer membrane</keyword>
<keyword id="KW-0449">Lipoprotein</keyword>
<keyword id="KW-0472">Membrane</keyword>
<keyword id="KW-0564">Palmitate</keyword>
<keyword id="KW-0732">Signal</keyword>
<keyword id="KW-0843">Virulence</keyword>
<reference key="1">
    <citation type="journal article" date="1993" name="Mol. Microbiol.">
        <title>Cloning and molecular characterization of a gene involved in Salmonella adherence and invasion of cultured epithelial cells.</title>
        <authorList>
            <person name="Altmeyer R.M."/>
            <person name="McNern J.K."/>
            <person name="Bossio J.C."/>
            <person name="Rosenshine I."/>
            <person name="Finlay B.B."/>
            <person name="Galan J.E."/>
        </authorList>
    </citation>
    <scope>NUCLEOTIDE SEQUENCE [GENOMIC DNA]</scope>
    <scope>FUNCTION</scope>
    <source>
        <strain>SL1344</strain>
    </source>
</reference>
<reference key="2">
    <citation type="journal article" date="2012" name="Proc. Natl. Acad. Sci. U.S.A.">
        <title>The transcriptional landscape and small RNAs of Salmonella enterica serovar Typhimurium.</title>
        <authorList>
            <person name="Kroger C."/>
            <person name="Dillon S.C."/>
            <person name="Cameron A.D."/>
            <person name="Papenfort K."/>
            <person name="Sivasankaran S.K."/>
            <person name="Hokamp K."/>
            <person name="Chao Y."/>
            <person name="Sittka A."/>
            <person name="Hebrard M."/>
            <person name="Handler K."/>
            <person name="Colgan A."/>
            <person name="Leekitcharoenphon P."/>
            <person name="Langridge G.C."/>
            <person name="Lohan A.J."/>
            <person name="Loftus B."/>
            <person name="Lucchini S."/>
            <person name="Ussery D.W."/>
            <person name="Dorman C.J."/>
            <person name="Thomson N.R."/>
            <person name="Vogel J."/>
            <person name="Hinton J.C."/>
        </authorList>
    </citation>
    <scope>NUCLEOTIDE SEQUENCE [LARGE SCALE GENOMIC DNA]</scope>
    <source>
        <strain>SL1344</strain>
    </source>
</reference>
<dbReference type="EMBL" id="Z17242">
    <property type="protein sequence ID" value="CAA78942.1"/>
    <property type="molecule type" value="Genomic_DNA"/>
</dbReference>
<dbReference type="EMBL" id="FQ312003">
    <property type="protein sequence ID" value="CBW18977.1"/>
    <property type="molecule type" value="Genomic_DNA"/>
</dbReference>
<dbReference type="PIR" id="S28065">
    <property type="entry name" value="S28065"/>
</dbReference>
<dbReference type="RefSeq" id="WP_000715092.1">
    <property type="nucleotide sequence ID" value="NZ_QASL01000017.1"/>
</dbReference>
<dbReference type="SMR" id="E1WAE4"/>
<dbReference type="KEGG" id="sey:SL1344_2879"/>
<dbReference type="PATRIC" id="fig|216597.6.peg.3202"/>
<dbReference type="HOGENOM" id="CLU_123343_0_0_6"/>
<dbReference type="BioCyc" id="SENT216597:SL1344_RS15010-MONOMER"/>
<dbReference type="Proteomes" id="UP000008962">
    <property type="component" value="Chromosome"/>
</dbReference>
<dbReference type="GO" id="GO:0009279">
    <property type="term" value="C:cell outer membrane"/>
    <property type="evidence" value="ECO:0007669"/>
    <property type="project" value="UniProtKB-SubCell"/>
</dbReference>
<dbReference type="InterPro" id="IPR006830">
    <property type="entry name" value="InvH"/>
</dbReference>
<dbReference type="NCBIfam" id="NF011869">
    <property type="entry name" value="PRK15341.1-2"/>
    <property type="match status" value="1"/>
</dbReference>
<dbReference type="Pfam" id="PF04741">
    <property type="entry name" value="InvH"/>
    <property type="match status" value="1"/>
</dbReference>
<dbReference type="PROSITE" id="PS51257">
    <property type="entry name" value="PROKAR_LIPOPROTEIN"/>
    <property type="match status" value="1"/>
</dbReference>
<proteinExistence type="inferred from homology"/>